<keyword id="KW-1185">Reference proteome</keyword>
<dbReference type="EMBL" id="AE000516">
    <property type="status" value="NOT_ANNOTATED_CDS"/>
    <property type="molecule type" value="Genomic_DNA"/>
</dbReference>
<dbReference type="PIR" id="E70675">
    <property type="entry name" value="E70675"/>
</dbReference>
<dbReference type="SMR" id="P9WHX8"/>
<dbReference type="Proteomes" id="UP000001020">
    <property type="component" value="Chromosome"/>
</dbReference>
<dbReference type="GO" id="GO:0052572">
    <property type="term" value="P:response to host immune response"/>
    <property type="evidence" value="ECO:0007669"/>
    <property type="project" value="TreeGrafter"/>
</dbReference>
<dbReference type="FunFam" id="1.20.1260.20:FF:000001">
    <property type="entry name" value="PPE family protein PPE41"/>
    <property type="match status" value="1"/>
</dbReference>
<dbReference type="Gene3D" id="1.20.1260.20">
    <property type="entry name" value="PPE superfamily"/>
    <property type="match status" value="1"/>
</dbReference>
<dbReference type="InterPro" id="IPR022171">
    <property type="entry name" value="PPE_C"/>
</dbReference>
<dbReference type="InterPro" id="IPR000030">
    <property type="entry name" value="PPE_dom"/>
</dbReference>
<dbReference type="InterPro" id="IPR038332">
    <property type="entry name" value="PPE_sf"/>
</dbReference>
<dbReference type="PANTHER" id="PTHR46766">
    <property type="entry name" value="GLUTAMINE-RICH PROTEIN 2"/>
    <property type="match status" value="1"/>
</dbReference>
<dbReference type="PANTHER" id="PTHR46766:SF1">
    <property type="entry name" value="GLUTAMINE-RICH PROTEIN 2"/>
    <property type="match status" value="1"/>
</dbReference>
<dbReference type="Pfam" id="PF00823">
    <property type="entry name" value="PPE"/>
    <property type="match status" value="1"/>
</dbReference>
<dbReference type="Pfam" id="PF12484">
    <property type="entry name" value="PPE-SVP"/>
    <property type="match status" value="1"/>
</dbReference>
<dbReference type="SUPFAM" id="SSF140459">
    <property type="entry name" value="PE/PPE dimer-like"/>
    <property type="match status" value="1"/>
</dbReference>
<reference key="1">
    <citation type="journal article" date="2002" name="J. Bacteriol.">
        <title>Whole-genome comparison of Mycobacterium tuberculosis clinical and laboratory strains.</title>
        <authorList>
            <person name="Fleischmann R.D."/>
            <person name="Alland D."/>
            <person name="Eisen J.A."/>
            <person name="Carpenter L."/>
            <person name="White O."/>
            <person name="Peterson J.D."/>
            <person name="DeBoy R.T."/>
            <person name="Dodson R.J."/>
            <person name="Gwinn M.L."/>
            <person name="Haft D.H."/>
            <person name="Hickey E.K."/>
            <person name="Kolonay J.F."/>
            <person name="Nelson W.C."/>
            <person name="Umayam L.A."/>
            <person name="Ermolaeva M.D."/>
            <person name="Salzberg S.L."/>
            <person name="Delcher A."/>
            <person name="Utterback T.R."/>
            <person name="Weidman J.F."/>
            <person name="Khouri H.M."/>
            <person name="Gill J."/>
            <person name="Mikula A."/>
            <person name="Bishai W."/>
            <person name="Jacobs W.R. Jr."/>
            <person name="Venter J.C."/>
            <person name="Fraser C.M."/>
        </authorList>
    </citation>
    <scope>NUCLEOTIDE SEQUENCE [LARGE SCALE GENOMIC DNA]</scope>
    <source>
        <strain>CDC 1551 / Oshkosh</strain>
    </source>
</reference>
<evidence type="ECO:0000305" key="1"/>
<comment type="similarity">
    <text evidence="1">Belongs to the mycobacterial PPE family.</text>
</comment>
<comment type="sequence caution" evidence="1">
    <conflict type="erroneous termination">
        <sequence resource="EMBL" id="AE000516"/>
    </conflict>
    <text>Truncated C-terminus.</text>
</comment>
<gene>
    <name type="primary">PPE61</name>
    <name type="ordered locus">MT3636</name>
</gene>
<organism>
    <name type="scientific">Mycobacterium tuberculosis (strain CDC 1551 / Oshkosh)</name>
    <dbReference type="NCBI Taxonomy" id="83331"/>
    <lineage>
        <taxon>Bacteria</taxon>
        <taxon>Bacillati</taxon>
        <taxon>Actinomycetota</taxon>
        <taxon>Actinomycetes</taxon>
        <taxon>Mycobacteriales</taxon>
        <taxon>Mycobacteriaceae</taxon>
        <taxon>Mycobacterium</taxon>
        <taxon>Mycobacterium tuberculosis complex</taxon>
    </lineage>
</organism>
<proteinExistence type="inferred from homology"/>
<name>PPE61_MYCTO</name>
<sequence>MFMDFAMLPPEVNSTRMYSGPGAGSLWAAAAAWDQVSAELQSAAETYRSVIASLTGWQWLGPSSVRMGAAVTPYVEWLTTTAAQARQTATQITAAATGFEQAFAMTVPPPAIMANRAQVLSLIATNFFGQNTAAIAALETQYAEMWEQDATAMYDYAATSAAARTLTPFTSPQQDTNSAGLPAQSAEVSRATANAGAADGNWLGNLLEEIGILLLPIAPELTPFFLEAGEIVNAIPFPSIVGDEFCLLDGLLAWYATIGSINNINSMGTGIIGAEKNLGILPELGSAAAAAAPPPADIAPAFLAPLTSMAKSLSDGALRGPGEVSAAMRGAGTIGQMSVPPAWKAPAVTTVRAFDATPMTTLPGGDAPAAGVPGLPGMPASGAGRAGVVPRYGVRLTVMTRPLSGG</sequence>
<protein>
    <recommendedName>
        <fullName>Uncharacterized PPE family protein PPE61</fullName>
    </recommendedName>
</protein>
<feature type="chain" id="PRO_0000428104" description="Uncharacterized PPE family protein PPE61">
    <location>
        <begin position="1"/>
        <end position="406"/>
    </location>
</feature>
<accession>P9WHX8</accession>
<accession>L0TD06</accession>
<accession>Q6MWW4</accession>